<organism>
    <name type="scientific">Chlamydia trachomatis serovar D (strain ATCC VR-885 / DSM 19411 / UW-3/Cx)</name>
    <dbReference type="NCBI Taxonomy" id="272561"/>
    <lineage>
        <taxon>Bacteria</taxon>
        <taxon>Pseudomonadati</taxon>
        <taxon>Chlamydiota</taxon>
        <taxon>Chlamydiia</taxon>
        <taxon>Chlamydiales</taxon>
        <taxon>Chlamydiaceae</taxon>
        <taxon>Chlamydia/Chlamydophila group</taxon>
        <taxon>Chlamydia</taxon>
    </lineage>
</organism>
<dbReference type="EC" id="1.3.3.-" evidence="4 5"/>
<dbReference type="EMBL" id="AE001273">
    <property type="protein sequence ID" value="AAC68213.1"/>
    <property type="molecule type" value="Genomic_DNA"/>
</dbReference>
<dbReference type="PIR" id="F71493">
    <property type="entry name" value="F71493"/>
</dbReference>
<dbReference type="RefSeq" id="NP_220127.1">
    <property type="nucleotide sequence ID" value="NC_000117.1"/>
</dbReference>
<dbReference type="RefSeq" id="WP_009871978.1">
    <property type="nucleotide sequence ID" value="NC_000117.1"/>
</dbReference>
<dbReference type="PDB" id="1RCW">
    <property type="method" value="X-ray"/>
    <property type="resolution" value="2.50 A"/>
    <property type="chains" value="A/B/C=1-231"/>
</dbReference>
<dbReference type="PDB" id="8VA9">
    <property type="method" value="X-ray"/>
    <property type="resolution" value="2.35 A"/>
    <property type="chains" value="A/B=1-220"/>
</dbReference>
<dbReference type="PDB" id="8VAB">
    <property type="method" value="X-ray"/>
    <property type="resolution" value="2.65 A"/>
    <property type="chains" value="A=1-220"/>
</dbReference>
<dbReference type="PDB" id="8VAG">
    <property type="method" value="X-ray"/>
    <property type="resolution" value="2.61 A"/>
    <property type="chains" value="A/B=1-220"/>
</dbReference>
<dbReference type="PDB" id="8VAI">
    <property type="method" value="X-ray"/>
    <property type="resolution" value="2.07 A"/>
    <property type="chains" value="A/B=1-220"/>
</dbReference>
<dbReference type="PDBsum" id="1RCW"/>
<dbReference type="PDBsum" id="8VA9"/>
<dbReference type="PDBsum" id="8VAB"/>
<dbReference type="PDBsum" id="8VAG"/>
<dbReference type="PDBsum" id="8VAI"/>
<dbReference type="SMR" id="O84616"/>
<dbReference type="STRING" id="272561.CT_610"/>
<dbReference type="EnsemblBacteria" id="AAC68213">
    <property type="protein sequence ID" value="AAC68213"/>
    <property type="gene ID" value="CT_610"/>
</dbReference>
<dbReference type="GeneID" id="884390"/>
<dbReference type="KEGG" id="ctr:CT_610"/>
<dbReference type="PATRIC" id="fig|272561.5.peg.667"/>
<dbReference type="HOGENOM" id="CLU_088144_0_0_0"/>
<dbReference type="InParanoid" id="O84616"/>
<dbReference type="OrthoDB" id="9800756at2"/>
<dbReference type="BioCyc" id="MetaCyc:CT_610-MONOMER"/>
<dbReference type="EvolutionaryTrace" id="O84616"/>
<dbReference type="Proteomes" id="UP000000431">
    <property type="component" value="Chromosome"/>
</dbReference>
<dbReference type="GO" id="GO:0005576">
    <property type="term" value="C:extracellular region"/>
    <property type="evidence" value="ECO:0007669"/>
    <property type="project" value="UniProtKB-SubCell"/>
</dbReference>
<dbReference type="GO" id="GO:0030430">
    <property type="term" value="C:host cell cytoplasm"/>
    <property type="evidence" value="ECO:0007669"/>
    <property type="project" value="UniProtKB-SubCell"/>
</dbReference>
<dbReference type="GO" id="GO:0046872">
    <property type="term" value="F:metal ion binding"/>
    <property type="evidence" value="ECO:0007669"/>
    <property type="project" value="UniProtKB-KW"/>
</dbReference>
<dbReference type="GO" id="GO:0016491">
    <property type="term" value="F:oxidoreductase activity"/>
    <property type="evidence" value="ECO:0007669"/>
    <property type="project" value="UniProtKB-KW"/>
</dbReference>
<dbReference type="GO" id="GO:0090729">
    <property type="term" value="F:toxin activity"/>
    <property type="evidence" value="ECO:0007669"/>
    <property type="project" value="UniProtKB-KW"/>
</dbReference>
<dbReference type="GO" id="GO:0044281">
    <property type="term" value="P:small molecule metabolic process"/>
    <property type="evidence" value="ECO:0007669"/>
    <property type="project" value="UniProtKB-ARBA"/>
</dbReference>
<dbReference type="GO" id="GO:0006790">
    <property type="term" value="P:sulfur compound metabolic process"/>
    <property type="evidence" value="ECO:0007669"/>
    <property type="project" value="UniProtKB-ARBA"/>
</dbReference>
<dbReference type="GO" id="GO:0141072">
    <property type="term" value="P:symbiont-mediated suppression of host tumor necrosis factor-mediated signaling pathway"/>
    <property type="evidence" value="ECO:0000269"/>
    <property type="project" value="SigSci"/>
</dbReference>
<dbReference type="CDD" id="cd19370">
    <property type="entry name" value="TenA_PqqC"/>
    <property type="match status" value="1"/>
</dbReference>
<dbReference type="Gene3D" id="1.20.910.10">
    <property type="entry name" value="Heme oxygenase-like"/>
    <property type="match status" value="1"/>
</dbReference>
<dbReference type="InterPro" id="IPR027572">
    <property type="entry name" value="Fol-rel_CADD"/>
</dbReference>
<dbReference type="InterPro" id="IPR016084">
    <property type="entry name" value="Haem_Oase-like_multi-hlx"/>
</dbReference>
<dbReference type="InterPro" id="IPR039068">
    <property type="entry name" value="PqqC-like"/>
</dbReference>
<dbReference type="InterPro" id="IPR004305">
    <property type="entry name" value="Thiaminase-2/PQQC"/>
</dbReference>
<dbReference type="NCBIfam" id="TIGR04305">
    <property type="entry name" value="fol_rel_CADD"/>
    <property type="match status" value="1"/>
</dbReference>
<dbReference type="PANTHER" id="PTHR40279:SF3">
    <property type="entry name" value="4-AMINOBENZOATE SYNTHASE"/>
    <property type="match status" value="1"/>
</dbReference>
<dbReference type="PANTHER" id="PTHR40279">
    <property type="entry name" value="PQQC-LIKE PROTEIN"/>
    <property type="match status" value="1"/>
</dbReference>
<dbReference type="Pfam" id="PF03070">
    <property type="entry name" value="TENA_THI-4"/>
    <property type="match status" value="1"/>
</dbReference>
<dbReference type="SMART" id="SM01236">
    <property type="entry name" value="Haem_oxygenase_2"/>
    <property type="match status" value="1"/>
</dbReference>
<dbReference type="SUPFAM" id="SSF48613">
    <property type="entry name" value="Heme oxygenase-like"/>
    <property type="match status" value="1"/>
</dbReference>
<feature type="chain" id="PRO_0000219994" description="4-aminobenzoate synthase">
    <location>
        <begin position="1"/>
        <end position="231"/>
    </location>
</feature>
<feature type="binding site" evidence="2 11">
    <location>
        <position position="81"/>
    </location>
    <ligand>
        <name>Fe(2+)</name>
        <dbReference type="ChEBI" id="CHEBI:29033"/>
        <label>1</label>
    </ligand>
</feature>
<feature type="binding site" evidence="2 11">
    <location>
        <position position="81"/>
    </location>
    <ligand>
        <name>Fe(2+)</name>
        <dbReference type="ChEBI" id="CHEBI:29033"/>
        <label>2</label>
    </ligand>
</feature>
<feature type="binding site" evidence="2 11">
    <location>
        <position position="88"/>
    </location>
    <ligand>
        <name>Fe(2+)</name>
        <dbReference type="ChEBI" id="CHEBI:29033"/>
        <label>1</label>
    </ligand>
</feature>
<feature type="binding site" evidence="2 11">
    <location>
        <position position="142"/>
    </location>
    <ligand>
        <name>Fe(2+)</name>
        <dbReference type="ChEBI" id="CHEBI:29033"/>
        <label>2</label>
    </ligand>
</feature>
<feature type="binding site" evidence="2 11">
    <location>
        <position position="174"/>
    </location>
    <ligand>
        <name>Fe(2+)</name>
        <dbReference type="ChEBI" id="CHEBI:29033"/>
        <label>1</label>
    </ligand>
</feature>
<feature type="binding site" evidence="2 11">
    <location>
        <position position="178"/>
    </location>
    <ligand>
        <name>Fe(2+)</name>
        <dbReference type="ChEBI" id="CHEBI:29033"/>
        <label>2</label>
    </ligand>
</feature>
<feature type="binding site" evidence="2 11">
    <location>
        <position position="181"/>
    </location>
    <ligand>
        <name>Fe(2+)</name>
        <dbReference type="ChEBI" id="CHEBI:29033"/>
        <label>2</label>
    </ligand>
</feature>
<feature type="site" description="Side-chain cleavage" evidence="10">
    <location>
        <position position="27"/>
    </location>
</feature>
<feature type="sequence variant" description="Inactive enzyme." evidence="10">
    <original>Y</original>
    <variation>G</variation>
    <location>
        <position position="27"/>
    </location>
</feature>
<feature type="mutagenesis site" description="Loss of PABA synthase activity." evidence="4 5">
    <original>Y</original>
    <variation>F</variation>
    <location>
        <position position="27"/>
    </location>
</feature>
<feature type="mutagenesis site" description="Loss of PABA synthase activity." evidence="4 5">
    <original>Y</original>
    <variation>F</variation>
    <location>
        <position position="43"/>
    </location>
</feature>
<feature type="mutagenesis site" description="Retains 70% of PABA synthase activity. Retains 30% of PABA synthase activity in the presence of iron and manganese." evidence="4 5">
    <original>Y</original>
    <variation>F</variation>
    <location>
        <position position="47"/>
    </location>
</feature>
<feature type="mutagenesis site" description="Apoptotic activity is decreased by more than 60%, but the mutant still binds to death receptors; when associated with A-88; F-170 and A-174." evidence="2">
    <original>E</original>
    <variation>A</variation>
    <location>
        <position position="81"/>
    </location>
</feature>
<feature type="mutagenesis site" description="Apoptotic activity is decreased by more than 60%, but the mutant still binds to death receptors; when associated with A-81; F-170 and A-174." evidence="2">
    <original>H</original>
    <variation>A</variation>
    <location>
        <position position="88"/>
    </location>
</feature>
<feature type="mutagenesis site" description="Retains 70% of PABA synthase activity in the presence of iron and manganese." evidence="5">
    <original>W</original>
    <variation>F</variation>
    <location>
        <position position="92"/>
    </location>
</feature>
<feature type="mutagenesis site" description="Retains 90% of PABA synthase activity. Retains 80% of PABA synthase activity in the presence of iron and manganese." evidence="4 5">
    <original>Y</original>
    <variation>F</variation>
    <location>
        <position position="141"/>
    </location>
</feature>
<feature type="mutagenesis site" description="Retains 5% of PABA synthase activity in the presence of iron and manganese." evidence="5">
    <original>K</original>
    <variation>A</variation>
    <location>
        <position position="152"/>
    </location>
</feature>
<feature type="mutagenesis site" description="Retains 2% of PABA synthase activity." evidence="4">
    <original>K</original>
    <variation>R</variation>
    <location>
        <position position="152"/>
    </location>
</feature>
<feature type="mutagenesis site" description="Retains 85% of PABA synthase activity. Apoptotic activity is decreased by 15%, but the mutant still binds to death receptors. Apoptotic activity is decreased by more than 60%, but the mutant still binds to death receptors; when associated with A-81; A-88 and A-174. Retains 20% of PABA synthase activity in the presence of iron and manganese." evidence="2 4 5">
    <original>Y</original>
    <variation>F</variation>
    <location>
        <position position="170"/>
    </location>
</feature>
<feature type="mutagenesis site" description="Apoptotic activity is decreased by more than 60%, but the mutant still binds to death receptors; when associated with A-81; A-88 and F-170." evidence="2">
    <original>H</original>
    <variation>A</variation>
    <location>
        <position position="174"/>
    </location>
</feature>
<feature type="helix" evidence="12">
    <location>
        <begin position="7"/>
        <end position="18"/>
    </location>
</feature>
<feature type="helix" evidence="12">
    <location>
        <begin position="21"/>
        <end position="23"/>
    </location>
</feature>
<feature type="helix" evidence="12">
    <location>
        <begin position="25"/>
        <end position="31"/>
    </location>
</feature>
<feature type="helix" evidence="12">
    <location>
        <begin position="37"/>
        <end position="62"/>
    </location>
</feature>
<feature type="helix" evidence="12">
    <location>
        <begin position="68"/>
        <end position="82"/>
    </location>
</feature>
<feature type="strand" evidence="12">
    <location>
        <begin position="83"/>
        <end position="86"/>
    </location>
</feature>
<feature type="helix" evidence="12">
    <location>
        <begin position="88"/>
        <end position="97"/>
    </location>
</feature>
<feature type="turn" evidence="12">
    <location>
        <begin position="98"/>
        <end position="100"/>
    </location>
</feature>
<feature type="helix" evidence="12">
    <location>
        <begin position="103"/>
        <end position="108"/>
    </location>
</feature>
<feature type="helix" evidence="12">
    <location>
        <begin position="113"/>
        <end position="126"/>
    </location>
</feature>
<feature type="helix" evidence="12">
    <location>
        <begin position="131"/>
        <end position="142"/>
    </location>
</feature>
<feature type="helix" evidence="12">
    <location>
        <begin position="145"/>
        <end position="158"/>
    </location>
</feature>
<feature type="helix" evidence="12">
    <location>
        <begin position="165"/>
        <end position="168"/>
    </location>
</feature>
<feature type="helix" evidence="12">
    <location>
        <begin position="169"/>
        <end position="172"/>
    </location>
</feature>
<feature type="helix" evidence="12">
    <location>
        <begin position="177"/>
        <end position="192"/>
    </location>
</feature>
<feature type="helix" evidence="12">
    <location>
        <begin position="197"/>
        <end position="216"/>
    </location>
</feature>
<sequence>MMEVFMNFLDQLDLIIQNKHMLEHTFYVKWSKGELTKEQLQAYAKDYYLHIKAFPKYLSAIHSRCDDLEARKLLLDNLMDEENGYPNHIDLWKQFVFALGVTPEELEAHEPSEAAKAKVATFMRWCTGDSLAAGVAALYSYESQIPRIAREKIRGLTEYFGFSNPEDYAYFTEHEEADVRHAREEKALIEMLLKDDADKVLEASQEVTQSLYGFLDSFLDPGTCCSCHQSY</sequence>
<protein>
    <recommendedName>
        <fullName evidence="8">4-aminobenzoate synthase</fullName>
        <ecNumber evidence="4 5">1.3.3.-</ecNumber>
    </recommendedName>
    <alternativeName>
        <fullName evidence="6 7">Chlamydia protein associating with death domains</fullName>
        <shortName evidence="6 7">CADD</shortName>
    </alternativeName>
    <alternativeName>
        <fullName evidence="8">para-aminobenzoate synthase</fullName>
        <shortName evidence="8">PABA synthase</shortName>
    </alternativeName>
</protein>
<accession>O84616</accession>
<name>CADD_CHLTR</name>
<gene>
    <name type="ordered locus">CT_610</name>
</gene>
<comment type="function">
    <text evidence="3 4 5">Involved in de novo para-aminobenzoate (PABA) biosynthesis (PubMed:23972426, PubMed:32967910, PubMed:36122239). Acts as a self-sacrificing or 'suicide' enzyme that utilizes its own active site tyrosine residue(s) as the substrate for PABA synthesis (PubMed:32967910, PubMed:36122239). The side chain of the tyrosine residue is released from the protein backbone via cleavage of the C(alpha)-C(beta) bond, leaving a glycine in place of the original tyrosine residue (PubMed:32967910, PubMed:36122239). Reaction requires O(2) and a reduced dimetal cofactor (PubMed:32967910, PubMed:36122239).</text>
</comment>
<comment type="function">
    <text evidence="1 2">Was also identified as a specific toxin that associates with death domains of tumor necrosis factor family (TNF) receptors and induces apoptosis in mammalian cell lines through a Caspase-dependent mechanism.</text>
</comment>
<comment type="cofactor">
    <cofactor evidence="4 5 9">
        <name>Fe(2+)</name>
        <dbReference type="ChEBI" id="CHEBI:29033"/>
    </cofactor>
    <cofactor evidence="5">
        <name>Mn(2+)</name>
        <dbReference type="ChEBI" id="CHEBI:29035"/>
    </cofactor>
    <text evidence="2 4 5">Binds 2 divalent metal cations per subunit (PubMed:15087448). Can use a diiron cofactor for catalysis (PubMed:32967910). However, activity is much higher in vitro in the presence of both iron and manganese, which implicates a heterodinuclear iron/manganese cofactor (PubMed:36122239).</text>
</comment>
<comment type="activity regulation">
    <text evidence="4 5">The protein is a cosubstrate rather than a true enzyme and is left in an inactive state after a single turnover (PubMed:32967910, PubMed:36122239). Inactive under anaerobic conditions (PubMed:32967910).</text>
</comment>
<comment type="subunit">
    <text evidence="1 2">Homodimer (PubMed:15087448). During infection, interacts with death domains of mammalian tumor necrosis factor (TNF) family receptors Fas, DR4, DR5 and to some extent TNFR1, but not with the respective downstream adapters (PubMed:11805081).</text>
</comment>
<comment type="subcellular location">
    <subcellularLocation>
        <location evidence="1">Secreted</location>
    </subcellularLocation>
    <subcellularLocation>
        <location evidence="1">Host cytoplasm</location>
    </subcellularLocation>
    <text evidence="1">Secreted into the host cytoplasm, where it co-localizes with Fas in the proximity of the inclusion body.</text>
</comment>
<comment type="developmental stage">
    <text evidence="1">In infected epithelial cells, is expressed late in the infectious cycle.</text>
</comment>
<comment type="miscellaneous">
    <text evidence="3">Can complement the PABA-auxotrophic E.coli mutant lacking pabA, pabB and pabC genes.</text>
</comment>
<comment type="similarity">
    <text evidence="8">Belongs to the CADD family.</text>
</comment>
<evidence type="ECO:0000269" key="1">
    <source>
    </source>
</evidence>
<evidence type="ECO:0000269" key="2">
    <source>
    </source>
</evidence>
<evidence type="ECO:0000269" key="3">
    <source>
    </source>
</evidence>
<evidence type="ECO:0000269" key="4">
    <source>
    </source>
</evidence>
<evidence type="ECO:0000269" key="5">
    <source>
    </source>
</evidence>
<evidence type="ECO:0000303" key="6">
    <source>
    </source>
</evidence>
<evidence type="ECO:0000303" key="7">
    <source>
    </source>
</evidence>
<evidence type="ECO:0000305" key="8"/>
<evidence type="ECO:0000305" key="9">
    <source>
    </source>
</evidence>
<evidence type="ECO:0000305" key="10">
    <source>
    </source>
</evidence>
<evidence type="ECO:0007744" key="11">
    <source>
        <dbReference type="PDB" id="1RCW"/>
    </source>
</evidence>
<evidence type="ECO:0007829" key="12">
    <source>
        <dbReference type="PDB" id="8VAI"/>
    </source>
</evidence>
<keyword id="KW-0002">3D-structure</keyword>
<keyword id="KW-1035">Host cytoplasm</keyword>
<keyword id="KW-0408">Iron</keyword>
<keyword id="KW-0479">Metal-binding</keyword>
<keyword id="KW-0560">Oxidoreductase</keyword>
<keyword id="KW-1185">Reference proteome</keyword>
<keyword id="KW-0964">Secreted</keyword>
<keyword id="KW-0800">Toxin</keyword>
<keyword id="KW-0843">Virulence</keyword>
<reference key="1">
    <citation type="journal article" date="1998" name="Science">
        <title>Genome sequence of an obligate intracellular pathogen of humans: Chlamydia trachomatis.</title>
        <authorList>
            <person name="Stephens R.S."/>
            <person name="Kalman S."/>
            <person name="Lammel C.J."/>
            <person name="Fan J."/>
            <person name="Marathe R."/>
            <person name="Aravind L."/>
            <person name="Mitchell W.P."/>
            <person name="Olinger L."/>
            <person name="Tatusov R.L."/>
            <person name="Zhao Q."/>
            <person name="Koonin E.V."/>
            <person name="Davis R.W."/>
        </authorList>
    </citation>
    <scope>NUCLEOTIDE SEQUENCE [LARGE SCALE GENOMIC DNA]</scope>
    <source>
        <strain>ATCC VR-885 / DSM 19411 / UW-3/Cx</strain>
    </source>
</reference>
<reference key="2">
    <citation type="journal article" date="2002" name="J. Biol. Chem.">
        <title>CADD, a Chlamydia protein that interacts with death receptors.</title>
        <authorList>
            <person name="Stenner-Liewen F."/>
            <person name="Liewen H."/>
            <person name="Zapata J.M."/>
            <person name="Pawlowski K."/>
            <person name="Godzik A."/>
            <person name="Reed J.C."/>
        </authorList>
    </citation>
    <scope>FUNCTION</scope>
    <scope>INTERACTION WITH DEATH RECEPTORS</scope>
    <scope>DEVELOPMENTAL STAGE</scope>
    <scope>SUBCELLULAR LOCATION</scope>
</reference>
<reference key="3">
    <citation type="journal article" date="2014" name="J. Biosci. Bioeng.">
        <title>New gene responsible for para-aminobenzoate biosynthesis.</title>
        <authorList>
            <person name="Satoh Y."/>
            <person name="Kuratsu M."/>
            <person name="Kobayashi D."/>
            <person name="Dairi T."/>
        </authorList>
    </citation>
    <scope>FUNCTION</scope>
    <scope>EXPRESSION IN E.COLI MUTANT</scope>
    <source>
        <strain>ATCC VR-885 / DSM 19411 / UW-3/Cx</strain>
    </source>
</reference>
<reference key="4">
    <citation type="journal article" date="2020" name="J. Bacteriol.">
        <title>An unusual route for p-aminobenzoate biosynthesis in Chlamydia trachomatis involves a probable self-sacrificing diiron oxygenase.</title>
        <authorList>
            <person name="Macias-Orihuela Y."/>
            <person name="Cast T."/>
            <person name="Crawford I."/>
            <person name="Brandecker K.J."/>
            <person name="Thiaville J.J."/>
            <person name="Murzin A.G."/>
            <person name="de Crecy-Lagard V."/>
            <person name="White R.H."/>
            <person name="Allen K.D."/>
        </authorList>
    </citation>
    <scope>FUNCTION</scope>
    <scope>CATALYTIC ACTIVITY</scope>
    <scope>REACTION MECHANISM</scope>
    <scope>COFACTOR</scope>
    <scope>ACTIVITY REGULATION</scope>
    <scope>MUTAGENESIS OF TYR-27; TYR-43; TYR-47; TYR-141; LYS-152 AND TYR-170</scope>
</reference>
<reference key="5">
    <citation type="journal article" date="2022" name="Proc. Natl. Acad. Sci. U.S.A.">
        <title>Self-sacrificial tyrosine cleavage by an Fe:Mn oxygenase for the biosynthesis of para-aminobenzoate in Chlamydia trachomatis.</title>
        <authorList>
            <person name="Manley O.M."/>
            <person name="Phan H.N."/>
            <person name="Stewart A.K."/>
            <person name="Mosley D.A."/>
            <person name="Xue S."/>
            <person name="Cha L."/>
            <person name="Bai H."/>
            <person name="Lightfoot V.C."/>
            <person name="Rucker P.A."/>
            <person name="Collins L."/>
            <person name="Williams T.I."/>
            <person name="Chang W.C."/>
            <person name="Guo Y."/>
            <person name="Makris T.M."/>
        </authorList>
    </citation>
    <scope>FUNCTION</scope>
    <scope>CATALYTIC ACTIVITY</scope>
    <scope>REACTION MECHANISM</scope>
    <scope>COFACTOR</scope>
    <scope>ACTIVITY REGULATION</scope>
    <scope>MUTAGENESIS OF TYR-27; TYR-43; TYR-47; TRP-92; TYR-141; LYS-152 AND TYR-170</scope>
</reference>
<reference evidence="11" key="6">
    <citation type="journal article" date="2004" name="J. Biol. Chem.">
        <title>Structure of the Chlamydia protein CADD reveals a redox enzyme that modulates host cell apoptosis.</title>
        <authorList>
            <person name="Schwarzenbacher R."/>
            <person name="Stenner-Liewen F."/>
            <person name="Liewen H."/>
            <person name="Robinson H."/>
            <person name="Yuan H."/>
            <person name="Bossy-Wetzel E."/>
            <person name="Reed J.C."/>
            <person name="Liddington R.C."/>
        </authorList>
    </citation>
    <scope>X-RAY CRYSTALLOGRAPHY (2.5 ANGSTROMS) IN COMPLEX WITH IRON</scope>
    <scope>SUBUNIT</scope>
    <scope>FUNCTION</scope>
    <scope>COFACTOR</scope>
    <scope>IRON-BINDING SITES</scope>
    <scope>MUTAGENESIS OF GLU-81; HIS-88; TYR-170 AND HIS-174</scope>
</reference>
<proteinExistence type="evidence at protein level"/>